<feature type="chain" id="PRO_0000219688" description="Photosystem II reaction center protein L">
    <location>
        <begin position="1"/>
        <end position="38"/>
    </location>
</feature>
<feature type="transmembrane region" description="Helical" evidence="1">
    <location>
        <begin position="17"/>
        <end position="37"/>
    </location>
</feature>
<evidence type="ECO:0000255" key="1">
    <source>
        <dbReference type="HAMAP-Rule" id="MF_01317"/>
    </source>
</evidence>
<comment type="function">
    <text evidence="1">One of the components of the core complex of photosystem II (PSII). PSII is a light-driven water:plastoquinone oxidoreductase that uses light energy to abstract electrons from H(2)O, generating O(2) and a proton gradient subsequently used for ATP formation. It consists of a core antenna complex that captures photons, and an electron transfer chain that converts photonic excitation into a charge separation. This subunit is found at the monomer-monomer interface and is required for correct PSII assembly and/or dimerization.</text>
</comment>
<comment type="subunit">
    <text evidence="1">PSII is composed of 1 copy each of membrane proteins PsbA, PsbB, PsbC, PsbD, PsbE, PsbF, PsbH, PsbI, PsbJ, PsbK, PsbL, PsbM, PsbT, PsbX, PsbY, PsbZ, Psb30/Ycf12, at least 3 peripheral proteins of the oxygen-evolving complex and a large number of cofactors. It forms dimeric complexes.</text>
</comment>
<comment type="subcellular location">
    <subcellularLocation>
        <location evidence="1">Plastid</location>
        <location evidence="1">Chloroplast thylakoid membrane</location>
        <topology evidence="1">Single-pass membrane protein</topology>
    </subcellularLocation>
</comment>
<comment type="similarity">
    <text evidence="1">Belongs to the PsbL family.</text>
</comment>
<reference key="1">
    <citation type="journal article" date="2003" name="Plant Syst. Evol.">
        <title>The chloroplast genome of the 'basal' angiosperm Calycanthus fertilis -- structural and phylogenetic analyses.</title>
        <authorList>
            <person name="Goremykin V."/>
            <person name="Hirsch-Ernst K.I."/>
            <person name="Woelfl S."/>
            <person name="Hellwig F.H."/>
        </authorList>
    </citation>
    <scope>NUCLEOTIDE SEQUENCE [LARGE SCALE GENOMIC DNA]</scope>
</reference>
<accession>Q7HKX8</accession>
<name>PSBL_CALFG</name>
<dbReference type="EMBL" id="AJ428413">
    <property type="protein sequence ID" value="CAD28736.1"/>
    <property type="molecule type" value="Genomic_DNA"/>
</dbReference>
<dbReference type="RefSeq" id="NP_862769.1">
    <property type="nucleotide sequence ID" value="NC_004993.1"/>
</dbReference>
<dbReference type="SMR" id="Q7HKX8"/>
<dbReference type="GeneID" id="2598016"/>
<dbReference type="GO" id="GO:0009535">
    <property type="term" value="C:chloroplast thylakoid membrane"/>
    <property type="evidence" value="ECO:0007669"/>
    <property type="project" value="UniProtKB-SubCell"/>
</dbReference>
<dbReference type="GO" id="GO:0009539">
    <property type="term" value="C:photosystem II reaction center"/>
    <property type="evidence" value="ECO:0007669"/>
    <property type="project" value="InterPro"/>
</dbReference>
<dbReference type="GO" id="GO:0015979">
    <property type="term" value="P:photosynthesis"/>
    <property type="evidence" value="ECO:0007669"/>
    <property type="project" value="UniProtKB-UniRule"/>
</dbReference>
<dbReference type="HAMAP" id="MF_01317">
    <property type="entry name" value="PSII_PsbL"/>
    <property type="match status" value="1"/>
</dbReference>
<dbReference type="InterPro" id="IPR003372">
    <property type="entry name" value="PSII_PsbL"/>
</dbReference>
<dbReference type="InterPro" id="IPR037266">
    <property type="entry name" value="PSII_PsbL_sf"/>
</dbReference>
<dbReference type="NCBIfam" id="NF001972">
    <property type="entry name" value="PRK00753.1"/>
    <property type="match status" value="1"/>
</dbReference>
<dbReference type="Pfam" id="PF02419">
    <property type="entry name" value="PsbL"/>
    <property type="match status" value="1"/>
</dbReference>
<dbReference type="SUPFAM" id="SSF161017">
    <property type="entry name" value="Photosystem II reaction center protein L, PsbL"/>
    <property type="match status" value="1"/>
</dbReference>
<proteinExistence type="inferred from homology"/>
<keyword id="KW-0150">Chloroplast</keyword>
<keyword id="KW-0472">Membrane</keyword>
<keyword id="KW-0602">Photosynthesis</keyword>
<keyword id="KW-0604">Photosystem II</keyword>
<keyword id="KW-0934">Plastid</keyword>
<keyword id="KW-0674">Reaction center</keyword>
<keyword id="KW-0793">Thylakoid</keyword>
<keyword id="KW-0812">Transmembrane</keyword>
<keyword id="KW-1133">Transmembrane helix</keyword>
<protein>
    <recommendedName>
        <fullName evidence="1">Photosystem II reaction center protein L</fullName>
        <shortName evidence="1">PSII-L</shortName>
    </recommendedName>
</protein>
<sequence length="38" mass="4470">MTQSNPNEQSVELNRTSLYWGLLLIFVLAVLFSNYFFN</sequence>
<geneLocation type="chloroplast"/>
<gene>
    <name evidence="1" type="primary">psbL</name>
</gene>
<organism>
    <name type="scientific">Calycanthus floridus var. glaucus</name>
    <name type="common">Eastern sweetshrub</name>
    <name type="synonym">Calycanthus fertilis var. ferax</name>
    <dbReference type="NCBI Taxonomy" id="212734"/>
    <lineage>
        <taxon>Eukaryota</taxon>
        <taxon>Viridiplantae</taxon>
        <taxon>Streptophyta</taxon>
        <taxon>Embryophyta</taxon>
        <taxon>Tracheophyta</taxon>
        <taxon>Spermatophyta</taxon>
        <taxon>Magnoliopsida</taxon>
        <taxon>Magnoliidae</taxon>
        <taxon>Laurales</taxon>
        <taxon>Calycanthaceae</taxon>
        <taxon>Calycanthus</taxon>
    </lineage>
</organism>